<protein>
    <recommendedName>
        <fullName evidence="1">UPF0285 protein MM_0679</fullName>
    </recommendedName>
</protein>
<dbReference type="EMBL" id="AE008384">
    <property type="protein sequence ID" value="AAM30375.1"/>
    <property type="molecule type" value="Genomic_DNA"/>
</dbReference>
<dbReference type="RefSeq" id="WP_011032630.1">
    <property type="nucleotide sequence ID" value="NC_003901.1"/>
</dbReference>
<dbReference type="SMR" id="Q8PZ16"/>
<dbReference type="GeneID" id="1479021"/>
<dbReference type="KEGG" id="mma:MM_0679"/>
<dbReference type="PATRIC" id="fig|192952.21.peg.809"/>
<dbReference type="eggNOG" id="arCOG04885">
    <property type="taxonomic scope" value="Archaea"/>
</dbReference>
<dbReference type="HOGENOM" id="CLU_846254_0_0_2"/>
<dbReference type="Proteomes" id="UP000000595">
    <property type="component" value="Chromosome"/>
</dbReference>
<dbReference type="HAMAP" id="MF_01087">
    <property type="entry name" value="UPF0285"/>
    <property type="match status" value="1"/>
</dbReference>
<dbReference type="InterPro" id="IPR043129">
    <property type="entry name" value="ATPase_NBD"/>
</dbReference>
<dbReference type="InterPro" id="IPR016735">
    <property type="entry name" value="Methan_mark_12"/>
</dbReference>
<dbReference type="NCBIfam" id="TIGR03281">
    <property type="entry name" value="methan_mark_12"/>
    <property type="match status" value="1"/>
</dbReference>
<dbReference type="PIRSF" id="PIRSF018783">
    <property type="entry name" value="UCP018783"/>
    <property type="match status" value="1"/>
</dbReference>
<dbReference type="SUPFAM" id="SSF53067">
    <property type="entry name" value="Actin-like ATPase domain"/>
    <property type="match status" value="1"/>
</dbReference>
<organism>
    <name type="scientific">Methanosarcina mazei (strain ATCC BAA-159 / DSM 3647 / Goe1 / Go1 / JCM 11833 / OCM 88)</name>
    <name type="common">Methanosarcina frisia</name>
    <dbReference type="NCBI Taxonomy" id="192952"/>
    <lineage>
        <taxon>Archaea</taxon>
        <taxon>Methanobacteriati</taxon>
        <taxon>Methanobacteriota</taxon>
        <taxon>Stenosarchaea group</taxon>
        <taxon>Methanomicrobia</taxon>
        <taxon>Methanosarcinales</taxon>
        <taxon>Methanosarcinaceae</taxon>
        <taxon>Methanosarcina</taxon>
    </lineage>
</organism>
<accession>Q8PZ16</accession>
<reference key="1">
    <citation type="journal article" date="2002" name="J. Mol. Microbiol. Biotechnol.">
        <title>The genome of Methanosarcina mazei: evidence for lateral gene transfer between Bacteria and Archaea.</title>
        <authorList>
            <person name="Deppenmeier U."/>
            <person name="Johann A."/>
            <person name="Hartsch T."/>
            <person name="Merkl R."/>
            <person name="Schmitz R.A."/>
            <person name="Martinez-Arias R."/>
            <person name="Henne A."/>
            <person name="Wiezer A."/>
            <person name="Baeumer S."/>
            <person name="Jacobi C."/>
            <person name="Brueggemann H."/>
            <person name="Lienard T."/>
            <person name="Christmann A."/>
            <person name="Boemecke M."/>
            <person name="Steckel S."/>
            <person name="Bhattacharyya A."/>
            <person name="Lykidis A."/>
            <person name="Overbeek R."/>
            <person name="Klenk H.-P."/>
            <person name="Gunsalus R.P."/>
            <person name="Fritz H.-J."/>
            <person name="Gottschalk G."/>
        </authorList>
    </citation>
    <scope>NUCLEOTIDE SEQUENCE [LARGE SCALE GENOMIC DNA]</scope>
    <source>
        <strain>ATCC BAA-159 / DSM 3647 / Goe1 / Go1 / JCM 11833 / OCM 88</strain>
    </source>
</reference>
<gene>
    <name type="ordered locus">MM_0679</name>
</gene>
<proteinExistence type="inferred from homology"/>
<name>Y679_METMA</name>
<evidence type="ECO:0000255" key="1">
    <source>
        <dbReference type="HAMAP-Rule" id="MF_01087"/>
    </source>
</evidence>
<feature type="chain" id="PRO_0000151264" description="UPF0285 protein MM_0679">
    <location>
        <begin position="1"/>
        <end position="325"/>
    </location>
</feature>
<comment type="similarity">
    <text evidence="1">Belongs to the UPF0285 family.</text>
</comment>
<sequence length="325" mass="34772">MAFIGVDHGTTAMRFALIEGEKVLTFELGRSEAAAMSEKEILESIEKEFEVKVKDIDLIALTYSMGDGFSEIKDVKKIEGRGLQSTEGAGKKTGGGTRVFDAVKNSGIPAIAIPGLHTRSKVDPRMKVFSHLTSPEKLGIAYHIRCMGYKDFVVSDISSNTVTLAVASGKVIGAIDACIFAPGVHHGPLDLEAIRNVDDGLRTANQAFMEAGALKMTPYKDRGELLNAAENGEEPALLALDTISLFAAMEIVSMQLLLKEYGVTGAAFLAGSVGEVEYVQKKISRHLGQECLSLGKWHAAIGCAGIARDVFAGENHILGIDVDYP</sequence>